<accession>Q6T1F6</accession>
<feature type="chain" id="PRO_0000401110" description="Bergaptol O-methyltransferase">
    <location>
        <begin position="1"/>
        <end position="354"/>
    </location>
</feature>
<feature type="active site" description="Proton acceptor" evidence="2">
    <location>
        <position position="259"/>
    </location>
</feature>
<feature type="binding site" evidence="1">
    <location>
        <position position="121"/>
    </location>
    <ligand>
        <name>bergaptol</name>
        <dbReference type="ChEBI" id="CHEBI:77728"/>
    </ligand>
</feature>
<feature type="binding site" evidence="1">
    <location>
        <position position="174"/>
    </location>
    <ligand>
        <name>S-adenosyl-L-homocysteine</name>
        <dbReference type="ChEBI" id="CHEBI:57856"/>
    </ligand>
</feature>
<feature type="binding site" evidence="1">
    <location>
        <position position="198"/>
    </location>
    <ligand>
        <name>S-adenosyl-L-homocysteine</name>
        <dbReference type="ChEBI" id="CHEBI:57856"/>
    </ligand>
</feature>
<feature type="binding site" evidence="1">
    <location>
        <position position="221"/>
    </location>
    <ligand>
        <name>S-adenosyl-L-homocysteine</name>
        <dbReference type="ChEBI" id="CHEBI:57856"/>
    </ligand>
</feature>
<feature type="binding site" evidence="1">
    <location>
        <position position="255"/>
    </location>
    <ligand>
        <name>S-adenosyl-L-homocysteine</name>
        <dbReference type="ChEBI" id="CHEBI:57856"/>
    </ligand>
</feature>
<feature type="binding site" evidence="1">
    <location>
        <position position="259"/>
    </location>
    <ligand>
        <name>bergaptol</name>
        <dbReference type="ChEBI" id="CHEBI:77728"/>
    </ligand>
</feature>
<organism>
    <name type="scientific">Ammi majus</name>
    <name type="common">Bishop's weed</name>
    <dbReference type="NCBI Taxonomy" id="48026"/>
    <lineage>
        <taxon>Eukaryota</taxon>
        <taxon>Viridiplantae</taxon>
        <taxon>Streptophyta</taxon>
        <taxon>Embryophyta</taxon>
        <taxon>Tracheophyta</taxon>
        <taxon>Spermatophyta</taxon>
        <taxon>Magnoliopsida</taxon>
        <taxon>eudicotyledons</taxon>
        <taxon>Gunneridae</taxon>
        <taxon>Pentapetalae</taxon>
        <taxon>asterids</taxon>
        <taxon>campanulids</taxon>
        <taxon>Apiales</taxon>
        <taxon>Apiaceae</taxon>
        <taxon>Apioideae</taxon>
        <taxon>apioid superclade</taxon>
        <taxon>Apieae</taxon>
        <taxon>Ammi</taxon>
    </lineage>
</organism>
<sequence length="354" mass="38727">MAEMKTSPSQDEEAGVVAMQLATSTVLPMILKSAIELDLLNTIAKAGPGNYLSPSDLASKLLLSNPDAPVMLARILRVLATYKVLGCKRGEVEWLYCWTPVCKYLSNNEDGASIAPILLVHQDKVTIKSWYHLTDAVRDGGTAFNKAHDMSIFEYASQDPQFNKAFNRSMRGHSTITMKKILETYKGFEGLKSIVDVGGGTGATLNMIISKYPTIKGINFDLPHVVGDAPSLPGVEHVGGNMFASVPKGDAIFLKWIFHSWGDEECLKILKKCHQALGDNKKVIVAEFILPEDPGGSDSATKSAVHLDAIMLAYVPGGKERTEKEFESLAKRAGFKSFTKVCCAFNTWIMEFSK</sequence>
<protein>
    <recommendedName>
        <fullName evidence="6">Bergaptol O-methyltransferase</fullName>
        <shortName evidence="4">BMT</shortName>
        <ecNumber>2.1.1.69</ecNumber>
    </recommendedName>
</protein>
<reference evidence="5 6" key="1">
    <citation type="journal article" date="2004" name="Eur. J. Biochem.">
        <title>Furanocoumarin biosynthesis in Ammi majus L. Cloning of bergaptol O-methyltransferase.</title>
        <authorList>
            <person name="Hehmann M."/>
            <person name="Lukacin R."/>
            <person name="Ekiert H."/>
            <person name="Matern U."/>
        </authorList>
    </citation>
    <scope>NUCLEOTIDE SEQUENCE [MRNA]</scope>
    <scope>CATALYTIC ACTIVITY</scope>
    <scope>ACTIVITY REGULATION</scope>
    <scope>BIOPHYSICOCHEMICAL PROPERTIES</scope>
    <scope>INDUCTION</scope>
</reference>
<comment type="catalytic activity">
    <reaction evidence="3">
        <text>a 5-hydroxyfurocoumarin + S-adenosyl-L-methionine = a 5-methoxyfurocoumarin + S-adenosyl-L-homocysteine + H(+)</text>
        <dbReference type="Rhea" id="RHEA:18861"/>
        <dbReference type="ChEBI" id="CHEBI:15378"/>
        <dbReference type="ChEBI" id="CHEBI:52058"/>
        <dbReference type="ChEBI" id="CHEBI:52061"/>
        <dbReference type="ChEBI" id="CHEBI:57856"/>
        <dbReference type="ChEBI" id="CHEBI:59789"/>
        <dbReference type="EC" id="2.1.1.69"/>
    </reaction>
</comment>
<comment type="catalytic activity">
    <reaction evidence="3">
        <text>bergaptol + S-adenosyl-L-methionine = bergapten + S-adenosyl-L-homocysteine</text>
        <dbReference type="Rhea" id="RHEA:11808"/>
        <dbReference type="ChEBI" id="CHEBI:18293"/>
        <dbReference type="ChEBI" id="CHEBI:57856"/>
        <dbReference type="ChEBI" id="CHEBI:59789"/>
        <dbReference type="ChEBI" id="CHEBI:77728"/>
        <dbReference type="EC" id="2.1.1.69"/>
    </reaction>
</comment>
<comment type="activity regulation">
    <text evidence="3">Inhibited by Cu(2+), Ni(2+) and Co(2+).</text>
</comment>
<comment type="biophysicochemical properties">
    <kinetics>
        <KM evidence="3">2.8 uM for bergaptol</KM>
        <KM evidence="3">6.5 uM for S-adenosyl-L-methionine</KM>
    </kinetics>
    <phDependence>
        <text evidence="3">Optimum pH is 8.0.</text>
    </phDependence>
    <temperatureDependence>
        <text evidence="3">Optimum temperature is 42 degrees Celsius.</text>
    </temperatureDependence>
</comment>
<comment type="induction">
    <text evidence="3">Up-regulated by Pmg elicitor.</text>
</comment>
<comment type="similarity">
    <text evidence="2">Belongs to the class I-like SAM-binding methyltransferase superfamily. Cation-independent O-methyltransferase family. COMT subfamily.</text>
</comment>
<name>BMT_AMMMJ</name>
<gene>
    <name evidence="4" type="primary">BMT</name>
</gene>
<keyword id="KW-0489">Methyltransferase</keyword>
<keyword id="KW-0949">S-adenosyl-L-methionine</keyword>
<keyword id="KW-0808">Transferase</keyword>
<evidence type="ECO:0000250" key="1">
    <source>
        <dbReference type="UniProtKB" id="A0A166U5H3"/>
    </source>
</evidence>
<evidence type="ECO:0000255" key="2">
    <source>
        <dbReference type="PROSITE-ProRule" id="PRU01020"/>
    </source>
</evidence>
<evidence type="ECO:0000269" key="3">
    <source>
    </source>
</evidence>
<evidence type="ECO:0000303" key="4">
    <source>
    </source>
</evidence>
<evidence type="ECO:0000305" key="5"/>
<evidence type="ECO:0000312" key="6">
    <source>
        <dbReference type="EMBL" id="AAR24096.2"/>
    </source>
</evidence>
<proteinExistence type="evidence at protein level"/>
<dbReference type="EC" id="2.1.1.69"/>
<dbReference type="EMBL" id="AY443006">
    <property type="protein sequence ID" value="AAR24096.2"/>
    <property type="molecule type" value="mRNA"/>
</dbReference>
<dbReference type="SMR" id="Q6T1F6"/>
<dbReference type="KEGG" id="ag:AAR24096"/>
<dbReference type="BRENDA" id="2.1.1.69">
    <property type="organism ID" value="296"/>
</dbReference>
<dbReference type="GO" id="GO:0030752">
    <property type="term" value="F:5-hydroxyfuranocoumarin 5-O-methyltransferase activity"/>
    <property type="evidence" value="ECO:0007669"/>
    <property type="project" value="UniProtKB-EC"/>
</dbReference>
<dbReference type="GO" id="GO:0008171">
    <property type="term" value="F:O-methyltransferase activity"/>
    <property type="evidence" value="ECO:0007669"/>
    <property type="project" value="InterPro"/>
</dbReference>
<dbReference type="GO" id="GO:0046983">
    <property type="term" value="F:protein dimerization activity"/>
    <property type="evidence" value="ECO:0007669"/>
    <property type="project" value="InterPro"/>
</dbReference>
<dbReference type="GO" id="GO:0032259">
    <property type="term" value="P:methylation"/>
    <property type="evidence" value="ECO:0007669"/>
    <property type="project" value="UniProtKB-KW"/>
</dbReference>
<dbReference type="CDD" id="cd02440">
    <property type="entry name" value="AdoMet_MTases"/>
    <property type="match status" value="1"/>
</dbReference>
<dbReference type="FunFam" id="1.10.10.10:FF:000357">
    <property type="entry name" value="Caffeic acid 3-O-methyltransferase"/>
    <property type="match status" value="1"/>
</dbReference>
<dbReference type="FunFam" id="3.40.50.150:FF:000061">
    <property type="entry name" value="Caffeic acid O-methyltransferase"/>
    <property type="match status" value="1"/>
</dbReference>
<dbReference type="Gene3D" id="3.40.50.150">
    <property type="entry name" value="Vaccinia Virus protein VP39"/>
    <property type="match status" value="1"/>
</dbReference>
<dbReference type="Gene3D" id="1.10.10.10">
    <property type="entry name" value="Winged helix-like DNA-binding domain superfamily/Winged helix DNA-binding domain"/>
    <property type="match status" value="1"/>
</dbReference>
<dbReference type="InterPro" id="IPR016461">
    <property type="entry name" value="COMT-like"/>
</dbReference>
<dbReference type="InterPro" id="IPR001077">
    <property type="entry name" value="O_MeTrfase_dom"/>
</dbReference>
<dbReference type="InterPro" id="IPR012967">
    <property type="entry name" value="Plant_O-MeTrfase_dimerisation"/>
</dbReference>
<dbReference type="InterPro" id="IPR029063">
    <property type="entry name" value="SAM-dependent_MTases_sf"/>
</dbReference>
<dbReference type="InterPro" id="IPR036388">
    <property type="entry name" value="WH-like_DNA-bd_sf"/>
</dbReference>
<dbReference type="InterPro" id="IPR036390">
    <property type="entry name" value="WH_DNA-bd_sf"/>
</dbReference>
<dbReference type="PANTHER" id="PTHR11746">
    <property type="entry name" value="O-METHYLTRANSFERASE"/>
    <property type="match status" value="1"/>
</dbReference>
<dbReference type="Pfam" id="PF08100">
    <property type="entry name" value="Dimerisation"/>
    <property type="match status" value="1"/>
</dbReference>
<dbReference type="Pfam" id="PF00891">
    <property type="entry name" value="Methyltransf_2"/>
    <property type="match status" value="1"/>
</dbReference>
<dbReference type="PIRSF" id="PIRSF005739">
    <property type="entry name" value="O-mtase"/>
    <property type="match status" value="1"/>
</dbReference>
<dbReference type="SUPFAM" id="SSF53335">
    <property type="entry name" value="S-adenosyl-L-methionine-dependent methyltransferases"/>
    <property type="match status" value="1"/>
</dbReference>
<dbReference type="SUPFAM" id="SSF46785">
    <property type="entry name" value="Winged helix' DNA-binding domain"/>
    <property type="match status" value="1"/>
</dbReference>
<dbReference type="PROSITE" id="PS51683">
    <property type="entry name" value="SAM_OMT_II"/>
    <property type="match status" value="1"/>
</dbReference>